<accession>Q6ANM8</accession>
<protein>
    <recommendedName>
        <fullName evidence="1">NADH-quinone oxidoreductase subunit H</fullName>
        <ecNumber evidence="1">7.1.1.-</ecNumber>
    </recommendedName>
    <alternativeName>
        <fullName evidence="1">NADH dehydrogenase I subunit H</fullName>
    </alternativeName>
    <alternativeName>
        <fullName evidence="1">NDH-1 subunit H</fullName>
    </alternativeName>
</protein>
<reference key="1">
    <citation type="journal article" date="2004" name="Environ. Microbiol.">
        <title>The genome of Desulfotalea psychrophila, a sulfate-reducing bacterium from permanently cold Arctic sediments.</title>
        <authorList>
            <person name="Rabus R."/>
            <person name="Ruepp A."/>
            <person name="Frickey T."/>
            <person name="Rattei T."/>
            <person name="Fartmann B."/>
            <person name="Stark M."/>
            <person name="Bauer M."/>
            <person name="Zibat A."/>
            <person name="Lombardot T."/>
            <person name="Becker I."/>
            <person name="Amann J."/>
            <person name="Gellner K."/>
            <person name="Teeling H."/>
            <person name="Leuschner W.D."/>
            <person name="Gloeckner F.-O."/>
            <person name="Lupas A.N."/>
            <person name="Amann R."/>
            <person name="Klenk H.-P."/>
        </authorList>
    </citation>
    <scope>NUCLEOTIDE SEQUENCE [LARGE SCALE GENOMIC DNA]</scope>
    <source>
        <strain>DSM 12343 / LSv54</strain>
    </source>
</reference>
<organism>
    <name type="scientific">Desulfotalea psychrophila (strain LSv54 / DSM 12343)</name>
    <dbReference type="NCBI Taxonomy" id="177439"/>
    <lineage>
        <taxon>Bacteria</taxon>
        <taxon>Pseudomonadati</taxon>
        <taxon>Thermodesulfobacteriota</taxon>
        <taxon>Desulfobulbia</taxon>
        <taxon>Desulfobulbales</taxon>
        <taxon>Desulfocapsaceae</taxon>
        <taxon>Desulfotalea</taxon>
    </lineage>
</organism>
<proteinExistence type="inferred from homology"/>
<keyword id="KW-0997">Cell inner membrane</keyword>
<keyword id="KW-1003">Cell membrane</keyword>
<keyword id="KW-0472">Membrane</keyword>
<keyword id="KW-0520">NAD</keyword>
<keyword id="KW-0874">Quinone</keyword>
<keyword id="KW-1185">Reference proteome</keyword>
<keyword id="KW-1278">Translocase</keyword>
<keyword id="KW-0812">Transmembrane</keyword>
<keyword id="KW-1133">Transmembrane helix</keyword>
<keyword id="KW-0830">Ubiquinone</keyword>
<gene>
    <name evidence="1" type="primary">nuoH</name>
    <name type="ordered locus">DP1317</name>
</gene>
<comment type="function">
    <text evidence="1">NDH-1 shuttles electrons from NADH, via FMN and iron-sulfur (Fe-S) centers, to quinones in the respiratory chain. The immediate electron acceptor for the enzyme in this species is believed to be ubiquinone. Couples the redox reaction to proton translocation (for every two electrons transferred, four hydrogen ions are translocated across the cytoplasmic membrane), and thus conserves the redox energy in a proton gradient. This subunit may bind ubiquinone.</text>
</comment>
<comment type="catalytic activity">
    <reaction evidence="1">
        <text>a quinone + NADH + 5 H(+)(in) = a quinol + NAD(+) + 4 H(+)(out)</text>
        <dbReference type="Rhea" id="RHEA:57888"/>
        <dbReference type="ChEBI" id="CHEBI:15378"/>
        <dbReference type="ChEBI" id="CHEBI:24646"/>
        <dbReference type="ChEBI" id="CHEBI:57540"/>
        <dbReference type="ChEBI" id="CHEBI:57945"/>
        <dbReference type="ChEBI" id="CHEBI:132124"/>
    </reaction>
</comment>
<comment type="subunit">
    <text evidence="1">NDH-1 is composed of 14 different subunits. Subunits NuoA, H, J, K, L, M, N constitute the membrane sector of the complex.</text>
</comment>
<comment type="subcellular location">
    <subcellularLocation>
        <location evidence="1">Cell inner membrane</location>
        <topology evidence="1">Multi-pass membrane protein</topology>
    </subcellularLocation>
</comment>
<comment type="similarity">
    <text evidence="1">Belongs to the complex I subunit 1 family.</text>
</comment>
<evidence type="ECO:0000255" key="1">
    <source>
        <dbReference type="HAMAP-Rule" id="MF_01350"/>
    </source>
</evidence>
<dbReference type="EC" id="7.1.1.-" evidence="1"/>
<dbReference type="EMBL" id="CR522870">
    <property type="protein sequence ID" value="CAG36046.1"/>
    <property type="molecule type" value="Genomic_DNA"/>
</dbReference>
<dbReference type="RefSeq" id="WP_011188558.1">
    <property type="nucleotide sequence ID" value="NC_006138.1"/>
</dbReference>
<dbReference type="SMR" id="Q6ANM8"/>
<dbReference type="STRING" id="177439.DP1317"/>
<dbReference type="KEGG" id="dps:DP1317"/>
<dbReference type="eggNOG" id="COG1005">
    <property type="taxonomic scope" value="Bacteria"/>
</dbReference>
<dbReference type="HOGENOM" id="CLU_015134_0_1_7"/>
<dbReference type="OrthoDB" id="9803734at2"/>
<dbReference type="Proteomes" id="UP000000602">
    <property type="component" value="Chromosome"/>
</dbReference>
<dbReference type="GO" id="GO:0005886">
    <property type="term" value="C:plasma membrane"/>
    <property type="evidence" value="ECO:0007669"/>
    <property type="project" value="UniProtKB-SubCell"/>
</dbReference>
<dbReference type="GO" id="GO:0003954">
    <property type="term" value="F:NADH dehydrogenase activity"/>
    <property type="evidence" value="ECO:0007669"/>
    <property type="project" value="TreeGrafter"/>
</dbReference>
<dbReference type="GO" id="GO:0016655">
    <property type="term" value="F:oxidoreductase activity, acting on NAD(P)H, quinone or similar compound as acceptor"/>
    <property type="evidence" value="ECO:0007669"/>
    <property type="project" value="UniProtKB-UniRule"/>
</dbReference>
<dbReference type="GO" id="GO:0048038">
    <property type="term" value="F:quinone binding"/>
    <property type="evidence" value="ECO:0007669"/>
    <property type="project" value="UniProtKB-KW"/>
</dbReference>
<dbReference type="GO" id="GO:0009060">
    <property type="term" value="P:aerobic respiration"/>
    <property type="evidence" value="ECO:0007669"/>
    <property type="project" value="TreeGrafter"/>
</dbReference>
<dbReference type="HAMAP" id="MF_01350">
    <property type="entry name" value="NDH1_NuoH"/>
    <property type="match status" value="1"/>
</dbReference>
<dbReference type="InterPro" id="IPR001694">
    <property type="entry name" value="NADH_UbQ_OxRdtase_su1/FPO"/>
</dbReference>
<dbReference type="InterPro" id="IPR018086">
    <property type="entry name" value="NADH_UbQ_OxRdtase_su1_CS"/>
</dbReference>
<dbReference type="NCBIfam" id="NF004741">
    <property type="entry name" value="PRK06076.1-2"/>
    <property type="match status" value="1"/>
</dbReference>
<dbReference type="PANTHER" id="PTHR11432">
    <property type="entry name" value="NADH DEHYDROGENASE SUBUNIT 1"/>
    <property type="match status" value="1"/>
</dbReference>
<dbReference type="PANTHER" id="PTHR11432:SF3">
    <property type="entry name" value="NADH-UBIQUINONE OXIDOREDUCTASE CHAIN 1"/>
    <property type="match status" value="1"/>
</dbReference>
<dbReference type="Pfam" id="PF00146">
    <property type="entry name" value="NADHdh"/>
    <property type="match status" value="1"/>
</dbReference>
<dbReference type="PROSITE" id="PS00668">
    <property type="entry name" value="COMPLEX1_ND1_2"/>
    <property type="match status" value="1"/>
</dbReference>
<feature type="chain" id="PRO_0000244912" description="NADH-quinone oxidoreductase subunit H">
    <location>
        <begin position="1"/>
        <end position="333"/>
    </location>
</feature>
<feature type="transmembrane region" description="Helical" evidence="1">
    <location>
        <begin position="8"/>
        <end position="28"/>
    </location>
</feature>
<feature type="transmembrane region" description="Helical" evidence="1">
    <location>
        <begin position="75"/>
        <end position="95"/>
    </location>
</feature>
<feature type="transmembrane region" description="Helical" evidence="1">
    <location>
        <begin position="108"/>
        <end position="128"/>
    </location>
</feature>
<feature type="transmembrane region" description="Helical" evidence="1">
    <location>
        <begin position="154"/>
        <end position="174"/>
    </location>
</feature>
<feature type="transmembrane region" description="Helical" evidence="1">
    <location>
        <begin position="191"/>
        <end position="211"/>
    </location>
</feature>
<feature type="transmembrane region" description="Helical" evidence="1">
    <location>
        <begin position="251"/>
        <end position="271"/>
    </location>
</feature>
<feature type="transmembrane region" description="Helical" evidence="1">
    <location>
        <begin position="273"/>
        <end position="293"/>
    </location>
</feature>
<feature type="transmembrane region" description="Helical" evidence="1">
    <location>
        <begin position="312"/>
        <end position="332"/>
    </location>
</feature>
<sequence>MSLTLINVLAAALIALAFVAVNAAYLVWAERRGAAFIQRRLGPVENGPWGLLQPPVDGIKLMTKQLVIPGGVDKILFMVAPVLAMFPALMSFVTIPFSENIVAHNMDIGLLVILAFASFAGLAILLAGWSSRNKYSMMAAIRAVSQTIAYEIPMLITAITVVLVSGSVDFIEIVHSQSGGFWHWNLWPLKPGLFNIFMPISFLIFFICSLAETNRAPFDLGEAESELVAGFHTEYSSMGFGLFFMGEYANIVIGACLTTLLFLGGWDCPFGLFPGVWWFLIKIYILIFTFIWIRWTFPRTTIYGLLNLSWKILIPLSLINLLLTAGFIKVFAP</sequence>
<name>NUOH_DESPS</name>